<evidence type="ECO:0000255" key="1">
    <source>
        <dbReference type="HAMAP-Rule" id="MF_00315"/>
    </source>
</evidence>
<name>DXS_KOCRD</name>
<protein>
    <recommendedName>
        <fullName evidence="1">1-deoxy-D-xylulose-5-phosphate synthase</fullName>
        <ecNumber evidence="1">2.2.1.7</ecNumber>
    </recommendedName>
    <alternativeName>
        <fullName evidence="1">1-deoxyxylulose-5-phosphate synthase</fullName>
        <shortName evidence="1">DXP synthase</shortName>
        <shortName evidence="1">DXPS</shortName>
    </alternativeName>
</protein>
<sequence>MTLLESIEGPEDLKGLDAAAMEQLAGEIRDFLISHVSATGGHLGPNLGVVELTLAVHRVFSSPRDSVVFDTGHQSYVHKLLTGRQDFDTLRQEGGLAGYPSRAESEHDIVESSHASSSLSWADGISRGYALTGQHDRHTVAVIGDGALTGGMAWEAVNNIASDRDRKVVIVVNDNGRSYAPTVGGFANHLKDLQASVQQGVDAVRTDRRYEQTLAKAKHLLTASGHLGQAVYRGLHGMKQGIKDVVIPQGIFEDLGMKYVGPVDGHDLAAMEQALTNARNFGGPVIVHAITEKGHGYLPARLDENDQFHSVPVIDPATGKPTGAASARTWTHVFRDEIAAIADERPDVVGITGAMLIPMGLQKMQLAHPERVVDVGIAEQHALTMAAGMAFSGLHPVVGLYATFLNRGFDQLLMDVALHHAGVTVVLDRAGVTGPDGPSHHGMWDLALLQIVPGLHLAAPRDEATMVEELREAVAVSDAPTVVRYPKGAVGAPLPALERFPDGVDVLARNGEAGGPQGEQRDVLIVGVGAMCVTALEVSERLAAHGVSSTVLDPRWVLPVADSVVRTAARHRIVVVIEDGVRAGGIGSLIRQQMRAQGVDTALNEVGLPTEFLEHASRDQILEHTGVTAQRIAQDTLASVLGTRVPYARPAHDDAAAPVSSSGPEPR</sequence>
<proteinExistence type="inferred from homology"/>
<accession>B2GJ56</accession>
<reference key="1">
    <citation type="journal article" date="2008" name="J. Bacteriol.">
        <title>Complete genome sequence of the soil actinomycete Kocuria rhizophila.</title>
        <authorList>
            <person name="Takarada H."/>
            <person name="Sekine M."/>
            <person name="Kosugi H."/>
            <person name="Matsuo Y."/>
            <person name="Fujisawa T."/>
            <person name="Omata S."/>
            <person name="Kishi E."/>
            <person name="Shimizu A."/>
            <person name="Tsukatani N."/>
            <person name="Tanikawa S."/>
            <person name="Fujita N."/>
            <person name="Harayama S."/>
        </authorList>
    </citation>
    <scope>NUCLEOTIDE SEQUENCE [LARGE SCALE GENOMIC DNA]</scope>
    <source>
        <strain>ATCC 9341 / DSM 348 / NBRC 103217 / DC2201</strain>
    </source>
</reference>
<comment type="function">
    <text evidence="1">Catalyzes the acyloin condensation reaction between C atoms 2 and 3 of pyruvate and glyceraldehyde 3-phosphate to yield 1-deoxy-D-xylulose-5-phosphate (DXP).</text>
</comment>
<comment type="catalytic activity">
    <reaction evidence="1">
        <text>D-glyceraldehyde 3-phosphate + pyruvate + H(+) = 1-deoxy-D-xylulose 5-phosphate + CO2</text>
        <dbReference type="Rhea" id="RHEA:12605"/>
        <dbReference type="ChEBI" id="CHEBI:15361"/>
        <dbReference type="ChEBI" id="CHEBI:15378"/>
        <dbReference type="ChEBI" id="CHEBI:16526"/>
        <dbReference type="ChEBI" id="CHEBI:57792"/>
        <dbReference type="ChEBI" id="CHEBI:59776"/>
        <dbReference type="EC" id="2.2.1.7"/>
    </reaction>
</comment>
<comment type="cofactor">
    <cofactor evidence="1">
        <name>Mg(2+)</name>
        <dbReference type="ChEBI" id="CHEBI:18420"/>
    </cofactor>
    <text evidence="1">Binds 1 Mg(2+) ion per subunit.</text>
</comment>
<comment type="cofactor">
    <cofactor evidence="1">
        <name>thiamine diphosphate</name>
        <dbReference type="ChEBI" id="CHEBI:58937"/>
    </cofactor>
    <text evidence="1">Binds 1 thiamine pyrophosphate per subunit.</text>
</comment>
<comment type="pathway">
    <text evidence="1">Metabolic intermediate biosynthesis; 1-deoxy-D-xylulose 5-phosphate biosynthesis; 1-deoxy-D-xylulose 5-phosphate from D-glyceraldehyde 3-phosphate and pyruvate: step 1/1.</text>
</comment>
<comment type="subunit">
    <text evidence="1">Homodimer.</text>
</comment>
<comment type="similarity">
    <text evidence="1">Belongs to the transketolase family. DXPS subfamily.</text>
</comment>
<feature type="chain" id="PRO_1000115748" description="1-deoxy-D-xylulose-5-phosphate synthase">
    <location>
        <begin position="1"/>
        <end position="667"/>
    </location>
</feature>
<feature type="binding site" evidence="1">
    <location>
        <position position="73"/>
    </location>
    <ligand>
        <name>thiamine diphosphate</name>
        <dbReference type="ChEBI" id="CHEBI:58937"/>
    </ligand>
</feature>
<feature type="binding site" evidence="1">
    <location>
        <begin position="113"/>
        <end position="115"/>
    </location>
    <ligand>
        <name>thiamine diphosphate</name>
        <dbReference type="ChEBI" id="CHEBI:58937"/>
    </ligand>
</feature>
<feature type="binding site" evidence="1">
    <location>
        <position position="145"/>
    </location>
    <ligand>
        <name>Mg(2+)</name>
        <dbReference type="ChEBI" id="CHEBI:18420"/>
    </ligand>
</feature>
<feature type="binding site" evidence="1">
    <location>
        <begin position="146"/>
        <end position="147"/>
    </location>
    <ligand>
        <name>thiamine diphosphate</name>
        <dbReference type="ChEBI" id="CHEBI:58937"/>
    </ligand>
</feature>
<feature type="binding site" evidence="1">
    <location>
        <position position="175"/>
    </location>
    <ligand>
        <name>Mg(2+)</name>
        <dbReference type="ChEBI" id="CHEBI:18420"/>
    </ligand>
</feature>
<feature type="binding site" evidence="1">
    <location>
        <position position="175"/>
    </location>
    <ligand>
        <name>thiamine diphosphate</name>
        <dbReference type="ChEBI" id="CHEBI:58937"/>
    </ligand>
</feature>
<feature type="binding site" evidence="1">
    <location>
        <position position="297"/>
    </location>
    <ligand>
        <name>thiamine diphosphate</name>
        <dbReference type="ChEBI" id="CHEBI:58937"/>
    </ligand>
</feature>
<feature type="binding site" evidence="1">
    <location>
        <position position="379"/>
    </location>
    <ligand>
        <name>thiamine diphosphate</name>
        <dbReference type="ChEBI" id="CHEBI:58937"/>
    </ligand>
</feature>
<gene>
    <name evidence="1" type="primary">dxs</name>
    <name type="ordered locus">KRH_14140</name>
</gene>
<organism>
    <name type="scientific">Kocuria rhizophila (strain ATCC 9341 / DSM 348 / NBRC 103217 / DC2201)</name>
    <dbReference type="NCBI Taxonomy" id="378753"/>
    <lineage>
        <taxon>Bacteria</taxon>
        <taxon>Bacillati</taxon>
        <taxon>Actinomycetota</taxon>
        <taxon>Actinomycetes</taxon>
        <taxon>Micrococcales</taxon>
        <taxon>Micrococcaceae</taxon>
        <taxon>Kocuria</taxon>
    </lineage>
</organism>
<keyword id="KW-0414">Isoprene biosynthesis</keyword>
<keyword id="KW-0460">Magnesium</keyword>
<keyword id="KW-0479">Metal-binding</keyword>
<keyword id="KW-1185">Reference proteome</keyword>
<keyword id="KW-0784">Thiamine biosynthesis</keyword>
<keyword id="KW-0786">Thiamine pyrophosphate</keyword>
<keyword id="KW-0808">Transferase</keyword>
<dbReference type="EC" id="2.2.1.7" evidence="1"/>
<dbReference type="EMBL" id="AP009152">
    <property type="protein sequence ID" value="BAG29761.1"/>
    <property type="molecule type" value="Genomic_DNA"/>
</dbReference>
<dbReference type="RefSeq" id="WP_012398482.1">
    <property type="nucleotide sequence ID" value="NC_010617.1"/>
</dbReference>
<dbReference type="SMR" id="B2GJ56"/>
<dbReference type="STRING" id="378753.KRH_14140"/>
<dbReference type="KEGG" id="krh:KRH_14140"/>
<dbReference type="eggNOG" id="COG1154">
    <property type="taxonomic scope" value="Bacteria"/>
</dbReference>
<dbReference type="HOGENOM" id="CLU_009227_1_4_11"/>
<dbReference type="OrthoDB" id="9803371at2"/>
<dbReference type="UniPathway" id="UPA00064">
    <property type="reaction ID" value="UER00091"/>
</dbReference>
<dbReference type="Proteomes" id="UP000008838">
    <property type="component" value="Chromosome"/>
</dbReference>
<dbReference type="GO" id="GO:0005829">
    <property type="term" value="C:cytosol"/>
    <property type="evidence" value="ECO:0007669"/>
    <property type="project" value="TreeGrafter"/>
</dbReference>
<dbReference type="GO" id="GO:0008661">
    <property type="term" value="F:1-deoxy-D-xylulose-5-phosphate synthase activity"/>
    <property type="evidence" value="ECO:0007669"/>
    <property type="project" value="UniProtKB-UniRule"/>
</dbReference>
<dbReference type="GO" id="GO:0000287">
    <property type="term" value="F:magnesium ion binding"/>
    <property type="evidence" value="ECO:0007669"/>
    <property type="project" value="UniProtKB-UniRule"/>
</dbReference>
<dbReference type="GO" id="GO:0030976">
    <property type="term" value="F:thiamine pyrophosphate binding"/>
    <property type="evidence" value="ECO:0007669"/>
    <property type="project" value="UniProtKB-UniRule"/>
</dbReference>
<dbReference type="GO" id="GO:0052865">
    <property type="term" value="P:1-deoxy-D-xylulose 5-phosphate biosynthetic process"/>
    <property type="evidence" value="ECO:0007669"/>
    <property type="project" value="UniProtKB-UniPathway"/>
</dbReference>
<dbReference type="GO" id="GO:0019288">
    <property type="term" value="P:isopentenyl diphosphate biosynthetic process, methylerythritol 4-phosphate pathway"/>
    <property type="evidence" value="ECO:0007669"/>
    <property type="project" value="TreeGrafter"/>
</dbReference>
<dbReference type="GO" id="GO:0016114">
    <property type="term" value="P:terpenoid biosynthetic process"/>
    <property type="evidence" value="ECO:0007669"/>
    <property type="project" value="UniProtKB-UniRule"/>
</dbReference>
<dbReference type="GO" id="GO:0009228">
    <property type="term" value="P:thiamine biosynthetic process"/>
    <property type="evidence" value="ECO:0007669"/>
    <property type="project" value="UniProtKB-UniRule"/>
</dbReference>
<dbReference type="CDD" id="cd02007">
    <property type="entry name" value="TPP_DXS"/>
    <property type="match status" value="1"/>
</dbReference>
<dbReference type="CDD" id="cd07033">
    <property type="entry name" value="TPP_PYR_DXS_TK_like"/>
    <property type="match status" value="1"/>
</dbReference>
<dbReference type="Gene3D" id="3.40.50.920">
    <property type="match status" value="1"/>
</dbReference>
<dbReference type="Gene3D" id="3.40.50.970">
    <property type="match status" value="2"/>
</dbReference>
<dbReference type="HAMAP" id="MF_00315">
    <property type="entry name" value="DXP_synth"/>
    <property type="match status" value="1"/>
</dbReference>
<dbReference type="InterPro" id="IPR005477">
    <property type="entry name" value="Dxylulose-5-P_synthase"/>
</dbReference>
<dbReference type="InterPro" id="IPR029061">
    <property type="entry name" value="THDP-binding"/>
</dbReference>
<dbReference type="InterPro" id="IPR009014">
    <property type="entry name" value="Transketo_C/PFOR_II"/>
</dbReference>
<dbReference type="InterPro" id="IPR005475">
    <property type="entry name" value="Transketolase-like_Pyr-bd"/>
</dbReference>
<dbReference type="InterPro" id="IPR020826">
    <property type="entry name" value="Transketolase_BS"/>
</dbReference>
<dbReference type="InterPro" id="IPR033248">
    <property type="entry name" value="Transketolase_C"/>
</dbReference>
<dbReference type="InterPro" id="IPR049557">
    <property type="entry name" value="Transketolase_CS"/>
</dbReference>
<dbReference type="NCBIfam" id="TIGR00204">
    <property type="entry name" value="dxs"/>
    <property type="match status" value="1"/>
</dbReference>
<dbReference type="NCBIfam" id="NF003933">
    <property type="entry name" value="PRK05444.2-2"/>
    <property type="match status" value="1"/>
</dbReference>
<dbReference type="PANTHER" id="PTHR43322">
    <property type="entry name" value="1-D-DEOXYXYLULOSE 5-PHOSPHATE SYNTHASE-RELATED"/>
    <property type="match status" value="1"/>
</dbReference>
<dbReference type="PANTHER" id="PTHR43322:SF5">
    <property type="entry name" value="1-DEOXY-D-XYLULOSE-5-PHOSPHATE SYNTHASE, CHLOROPLASTIC"/>
    <property type="match status" value="1"/>
</dbReference>
<dbReference type="Pfam" id="PF13292">
    <property type="entry name" value="DXP_synthase_N"/>
    <property type="match status" value="1"/>
</dbReference>
<dbReference type="Pfam" id="PF02779">
    <property type="entry name" value="Transket_pyr"/>
    <property type="match status" value="1"/>
</dbReference>
<dbReference type="Pfam" id="PF02780">
    <property type="entry name" value="Transketolase_C"/>
    <property type="match status" value="1"/>
</dbReference>
<dbReference type="SMART" id="SM00861">
    <property type="entry name" value="Transket_pyr"/>
    <property type="match status" value="1"/>
</dbReference>
<dbReference type="SUPFAM" id="SSF52518">
    <property type="entry name" value="Thiamin diphosphate-binding fold (THDP-binding)"/>
    <property type="match status" value="2"/>
</dbReference>
<dbReference type="SUPFAM" id="SSF52922">
    <property type="entry name" value="TK C-terminal domain-like"/>
    <property type="match status" value="1"/>
</dbReference>
<dbReference type="PROSITE" id="PS00801">
    <property type="entry name" value="TRANSKETOLASE_1"/>
    <property type="match status" value="1"/>
</dbReference>
<dbReference type="PROSITE" id="PS00802">
    <property type="entry name" value="TRANSKETOLASE_2"/>
    <property type="match status" value="1"/>
</dbReference>